<protein>
    <recommendedName>
        <fullName>Pupal cuticle protein G1A</fullName>
    </recommendedName>
    <alternativeName>
        <fullName>TM-PCP G1A</fullName>
        <shortName>TM-G1A</shortName>
    </alternativeName>
</protein>
<dbReference type="GO" id="GO:0042302">
    <property type="term" value="F:structural constituent of cuticle"/>
    <property type="evidence" value="ECO:0007669"/>
    <property type="project" value="UniProtKB-KW"/>
</dbReference>
<dbReference type="InterPro" id="IPR022727">
    <property type="entry name" value="Cuticle_C1"/>
</dbReference>
<dbReference type="PANTHER" id="PTHR39068">
    <property type="entry name" value="LARVAL/PUPAL CUTICLE PROTEIN H1C-LIKE PROTEIN-RELATED"/>
    <property type="match status" value="1"/>
</dbReference>
<dbReference type="PANTHER" id="PTHR39068:SF2">
    <property type="entry name" value="MIP24391P"/>
    <property type="match status" value="1"/>
</dbReference>
<dbReference type="Pfam" id="PF11018">
    <property type="entry name" value="Cuticle_3"/>
    <property type="match status" value="1"/>
</dbReference>
<evidence type="ECO:0000269" key="1">
    <source>
    </source>
</evidence>
<accession>P80685</accession>
<reference key="1">
    <citation type="journal article" date="1997" name="Insect Biochem. Mol. Biol.">
        <title>Sequence studies of proteins from larval and pupal cuticle of the yellow meal worm, Tenebrio molitor.</title>
        <authorList>
            <person name="Andersen S.O."/>
            <person name="Rafn K."/>
            <person name="Roepstorff P."/>
        </authorList>
    </citation>
    <scope>PROTEIN SEQUENCE</scope>
    <scope>MASS SPECTROMETRY</scope>
    <source>
        <tissue>Cuticle</tissue>
    </source>
</reference>
<keyword id="KW-0193">Cuticle</keyword>
<keyword id="KW-0903">Direct protein sequencing</keyword>
<keyword id="KW-0677">Repeat</keyword>
<sequence>GLLGAPAVATYAAAPAVAYSAAPAVSTAYINQAAPVLAHAGPVAVAHAAPYAVHAPAVGASHQAIVRSLGGNQAVSHYSKAVDSAFSSVRKFDTRITNDALLHAPVAVAHAAPVVSTYAAHAPVVSSYAHAPLVSSYAAHAPLVSSYAAHAPLVSSYAAHAPVLSTAYAAHAPVVSSYAAPVVARTAAVGYSPAAVVSHTSFTGLGASYAW</sequence>
<comment type="function">
    <text>Component of the cuticle of the pupa of Tenebrio molitor.</text>
</comment>
<comment type="domain">
    <text>The tetrapeptide (A-A-P-[AV]) repeats found throughout the protein are also present in many proteins constituting the protective envelope of other species.</text>
</comment>
<comment type="mass spectrometry"/>
<proteinExistence type="evidence at protein level"/>
<feature type="chain" id="PRO_0000196137" description="Pupal cuticle protein G1A">
    <location>
        <begin position="1"/>
        <end position="211"/>
    </location>
</feature>
<feature type="repeat" description="1">
    <location>
        <begin position="13"/>
        <end position="16"/>
    </location>
</feature>
<feature type="repeat" description="2">
    <location>
        <begin position="21"/>
        <end position="24"/>
    </location>
</feature>
<feature type="repeat" description="3">
    <location>
        <begin position="33"/>
        <end position="36"/>
    </location>
</feature>
<feature type="repeat" description="4">
    <location>
        <begin position="111"/>
        <end position="114"/>
    </location>
</feature>
<feature type="repeat" description="5">
    <location>
        <begin position="179"/>
        <end position="182"/>
    </location>
</feature>
<organism>
    <name type="scientific">Tenebrio molitor</name>
    <name type="common">Yellow mealworm beetle</name>
    <dbReference type="NCBI Taxonomy" id="7067"/>
    <lineage>
        <taxon>Eukaryota</taxon>
        <taxon>Metazoa</taxon>
        <taxon>Ecdysozoa</taxon>
        <taxon>Arthropoda</taxon>
        <taxon>Hexapoda</taxon>
        <taxon>Insecta</taxon>
        <taxon>Pterygota</taxon>
        <taxon>Neoptera</taxon>
        <taxon>Endopterygota</taxon>
        <taxon>Coleoptera</taxon>
        <taxon>Polyphaga</taxon>
        <taxon>Cucujiformia</taxon>
        <taxon>Tenebrionidae</taxon>
        <taxon>Tenebrio</taxon>
    </lineage>
</organism>
<name>CUG1A_TENMO</name>